<accession>Q6G644</accession>
<sequence>MKKRIDYLSNKQNKYSIRRFTVGTTSVIVGATILFGIGNHQAQASEQSNDTTQSSKNNASADSEKNNMIETPQLNTTANDTSDISANTNSANVDSTAKPMSTQTSNTTTTEPASTNETPQLTAIKDQATAAKMQDQTVPQEANSQVDNKTTNDANSIATNSELKNPQTLDLPQSSPQTISNAQGTSKPSVRTRAVRSLAVAEPVVNAADAKGTNVNDKVTAKDFQLEKTTFDPNQSGNTFMAANFTVTGQVKSGDYFTAKLPDSVTGNGDVDYSNSNNTMPIADIVNDKNEVVAKATYDILTKTYTFVFTDYVNDKQNINGKFSLPLFTDRAKAPKSGTYDANINIADEMFNNKITYNYSSPIAGIDKPNGANISSQIIGVDTASGQNTYKQTVFVNPKQRVLGNTWVYIKGYQDKIEESSGKVSATDTKLRIFEVNDTSKLSDSYYADPNDSNLKEVTDQFKDKITYKYQNVASINFGDINKTYVVLVEGHYDKTGKNLKTQVIQENVDPATGKDYSIFGWNNENVVRYGGGSADGDSAVNPKDPTPGPPVDPEPSPDPEPEPSPDPDPEPTPDPEPSPDPDPDSDSDSDSGSDSDSDSDSDSDSDSDSGSDSDSDSDSDSESDSESDSDSDSESDSDSDSDSESDSDSDSDSDSDSDSDSDSDSDSDSDSDSDSDSDSDSESDSDSDSDSESDSDSDSDSDSDSDSDSDSDSDSDSDSDSDSDSDSESDSDSDSDSDSDSDSDSDSDSDSDSDSDSDSDSDSDSESDSDSDSDSDSDSDSDSDSDSDSDSDSDSDSDSESDSDSDSDSDSDSDSDSDSDSDSDSDSDSDSRVTPPNNEQKAPSNPKGEVNHSNKVSKQHKTDALPETGDKSENTNATLFGAMMALLGSLLLFRKRKQDHKEKA</sequence>
<protein>
    <recommendedName>
        <fullName>Clumping factor B</fullName>
    </recommendedName>
    <alternativeName>
        <fullName>Fibrinogen receptor B</fullName>
    </alternativeName>
    <alternativeName>
        <fullName>Fibrinogen-binding protein B</fullName>
    </alternativeName>
</protein>
<gene>
    <name type="primary">clfB</name>
    <name type="ordered locus">SAS2516</name>
</gene>
<comment type="function">
    <text evidence="1">Cell surface-associated protein implicated in virulence by promoting bacterial attachment to both alpha- and beta-chains of human fibrinogen and inducing the formation of bacterial clumps.</text>
</comment>
<comment type="subcellular location">
    <subcellularLocation>
        <location evidence="3">Secreted</location>
        <location evidence="3">Cell wall</location>
        <topology evidence="3">Peptidoglycan-anchor</topology>
    </subcellularLocation>
    <text evidence="2">Anchored to the cell wall by sortase A (By similarity).</text>
</comment>
<comment type="domain">
    <text evidence="1">The Asp/Ser-rich domain functions as a stalk to allow the ligand binding domain to be displayed in a functional form on the cell surface.</text>
</comment>
<comment type="PTM">
    <text evidence="1">Proteolytically cleaved by aureolysin (aur). This cleavage leads to the inactivation of ClfB (By similarity).</text>
</comment>
<comment type="similarity">
    <text evidence="5">Belongs to the serine-aspartate repeat-containing protein (SDr) family.</text>
</comment>
<dbReference type="EMBL" id="BX571857">
    <property type="protein sequence ID" value="CAG44333.1"/>
    <property type="molecule type" value="Genomic_DNA"/>
</dbReference>
<dbReference type="RefSeq" id="WP_000745818.1">
    <property type="nucleotide sequence ID" value="NC_002953.3"/>
</dbReference>
<dbReference type="SMR" id="Q6G644"/>
<dbReference type="KEGG" id="sas:SAS2516"/>
<dbReference type="HOGENOM" id="CLU_004137_1_2_9"/>
<dbReference type="PRO" id="PR:Q6G644"/>
<dbReference type="GO" id="GO:0005576">
    <property type="term" value="C:extracellular region"/>
    <property type="evidence" value="ECO:0007669"/>
    <property type="project" value="UniProtKB-KW"/>
</dbReference>
<dbReference type="GO" id="GO:0007155">
    <property type="term" value="P:cell adhesion"/>
    <property type="evidence" value="ECO:0007669"/>
    <property type="project" value="InterPro"/>
</dbReference>
<dbReference type="Gene3D" id="2.60.40.1280">
    <property type="match status" value="1"/>
</dbReference>
<dbReference type="Gene3D" id="2.60.40.1290">
    <property type="match status" value="1"/>
</dbReference>
<dbReference type="InterPro" id="IPR011266">
    <property type="entry name" value="Adhesin_Fg-bd_dom_2"/>
</dbReference>
<dbReference type="InterPro" id="IPR008966">
    <property type="entry name" value="Adhesion_dom_sf"/>
</dbReference>
<dbReference type="InterPro" id="IPR011252">
    <property type="entry name" value="Fibrogen-bd_dom1"/>
</dbReference>
<dbReference type="InterPro" id="IPR019931">
    <property type="entry name" value="LPXTG_anchor"/>
</dbReference>
<dbReference type="InterPro" id="IPR050972">
    <property type="entry name" value="SDr-like"/>
</dbReference>
<dbReference type="InterPro" id="IPR041171">
    <property type="entry name" value="SDR_Ig"/>
</dbReference>
<dbReference type="InterPro" id="IPR005877">
    <property type="entry name" value="YSIRK_signal_dom"/>
</dbReference>
<dbReference type="NCBIfam" id="TIGR01167">
    <property type="entry name" value="LPXTG_anchor"/>
    <property type="match status" value="1"/>
</dbReference>
<dbReference type="NCBIfam" id="NF033845">
    <property type="entry name" value="MSCRAMM_ClfB"/>
    <property type="match status" value="1"/>
</dbReference>
<dbReference type="NCBIfam" id="TIGR01168">
    <property type="entry name" value="YSIRK_signal"/>
    <property type="match status" value="1"/>
</dbReference>
<dbReference type="PANTHER" id="PTHR34403">
    <property type="entry name" value="TOL-PAL SYSTEM PROTEIN TOLA"/>
    <property type="match status" value="1"/>
</dbReference>
<dbReference type="PANTHER" id="PTHR34403:SF8">
    <property type="entry name" value="TOL-PAL SYSTEM PROTEIN TOLA"/>
    <property type="match status" value="1"/>
</dbReference>
<dbReference type="Pfam" id="PF17961">
    <property type="entry name" value="Big_8"/>
    <property type="match status" value="1"/>
</dbReference>
<dbReference type="Pfam" id="PF00746">
    <property type="entry name" value="Gram_pos_anchor"/>
    <property type="match status" value="1"/>
</dbReference>
<dbReference type="Pfam" id="PF10425">
    <property type="entry name" value="SdrG_C_C"/>
    <property type="match status" value="1"/>
</dbReference>
<dbReference type="Pfam" id="PF04650">
    <property type="entry name" value="YSIRK_signal"/>
    <property type="match status" value="1"/>
</dbReference>
<dbReference type="SUPFAM" id="SSF49401">
    <property type="entry name" value="Bacterial adhesins"/>
    <property type="match status" value="2"/>
</dbReference>
<dbReference type="PROSITE" id="PS50847">
    <property type="entry name" value="GRAM_POS_ANCHORING"/>
    <property type="match status" value="1"/>
</dbReference>
<feature type="signal peptide" evidence="1">
    <location>
        <begin position="1"/>
        <end position="44"/>
    </location>
</feature>
<feature type="chain" id="PRO_0000042014" description="Clumping factor B">
    <location>
        <begin position="45"/>
        <end position="869"/>
    </location>
</feature>
<feature type="propeptide" id="PRO_0000042015" description="Removed by sortase" evidence="3">
    <location>
        <begin position="870"/>
        <end position="905"/>
    </location>
</feature>
<feature type="region of interest" description="Disordered" evidence="4">
    <location>
        <begin position="44"/>
        <end position="191"/>
    </location>
</feature>
<feature type="region of interest" description="Ligand binding A region" evidence="1">
    <location>
        <begin position="45"/>
        <end position="542"/>
    </location>
</feature>
<feature type="region of interest" description="Disordered" evidence="4">
    <location>
        <begin position="530"/>
        <end position="877"/>
    </location>
</feature>
<feature type="short sequence motif" description="YSIRK-G/S signaling motif" evidence="2">
    <location>
        <begin position="15"/>
        <end position="26"/>
    </location>
</feature>
<feature type="short sequence motif" description="MIDAS-like motif">
    <location>
        <begin position="272"/>
        <end position="276"/>
    </location>
</feature>
<feature type="short sequence motif" description="LPXTG sorting signal" evidence="3">
    <location>
        <begin position="866"/>
        <end position="870"/>
    </location>
</feature>
<feature type="compositionally biased region" description="Polar residues" evidence="4">
    <location>
        <begin position="44"/>
        <end position="61"/>
    </location>
</feature>
<feature type="compositionally biased region" description="Polar residues" evidence="4">
    <location>
        <begin position="68"/>
        <end position="101"/>
    </location>
</feature>
<feature type="compositionally biased region" description="Low complexity" evidence="4">
    <location>
        <begin position="102"/>
        <end position="119"/>
    </location>
</feature>
<feature type="compositionally biased region" description="Polar residues" evidence="4">
    <location>
        <begin position="134"/>
        <end position="189"/>
    </location>
</feature>
<feature type="compositionally biased region" description="Pro residues" evidence="4">
    <location>
        <begin position="545"/>
        <end position="555"/>
    </location>
</feature>
<feature type="compositionally biased region" description="Acidic residues" evidence="4">
    <location>
        <begin position="556"/>
        <end position="829"/>
    </location>
</feature>
<feature type="compositionally biased region" description="Polar residues" evidence="4">
    <location>
        <begin position="833"/>
        <end position="844"/>
    </location>
</feature>
<feature type="compositionally biased region" description="Basic and acidic residues" evidence="4">
    <location>
        <begin position="861"/>
        <end position="874"/>
    </location>
</feature>
<feature type="site" description="Cleavage; by aureolysin" evidence="1">
    <location>
        <begin position="197"/>
        <end position="198"/>
    </location>
</feature>
<feature type="site" description="Cleavage; by aureolysin" evidence="1">
    <location>
        <begin position="199"/>
        <end position="200"/>
    </location>
</feature>
<feature type="modified residue" description="Pentaglycyl murein peptidoglycan amidated threonine" evidence="3">
    <location>
        <position position="869"/>
    </location>
</feature>
<keyword id="KW-0134">Cell wall</keyword>
<keyword id="KW-0572">Peptidoglycan-anchor</keyword>
<keyword id="KW-0964">Secreted</keyword>
<keyword id="KW-0732">Signal</keyword>
<keyword id="KW-0843">Virulence</keyword>
<name>CLFB_STAAS</name>
<proteinExistence type="inferred from homology"/>
<organism>
    <name type="scientific">Staphylococcus aureus (strain MSSA476)</name>
    <dbReference type="NCBI Taxonomy" id="282459"/>
    <lineage>
        <taxon>Bacteria</taxon>
        <taxon>Bacillati</taxon>
        <taxon>Bacillota</taxon>
        <taxon>Bacilli</taxon>
        <taxon>Bacillales</taxon>
        <taxon>Staphylococcaceae</taxon>
        <taxon>Staphylococcus</taxon>
    </lineage>
</organism>
<reference key="1">
    <citation type="journal article" date="2004" name="Proc. Natl. Acad. Sci. U.S.A.">
        <title>Complete genomes of two clinical Staphylococcus aureus strains: evidence for the rapid evolution of virulence and drug resistance.</title>
        <authorList>
            <person name="Holden M.T.G."/>
            <person name="Feil E.J."/>
            <person name="Lindsay J.A."/>
            <person name="Peacock S.J."/>
            <person name="Day N.P.J."/>
            <person name="Enright M.C."/>
            <person name="Foster T.J."/>
            <person name="Moore C.E."/>
            <person name="Hurst L."/>
            <person name="Atkin R."/>
            <person name="Barron A."/>
            <person name="Bason N."/>
            <person name="Bentley S.D."/>
            <person name="Chillingworth C."/>
            <person name="Chillingworth T."/>
            <person name="Churcher C."/>
            <person name="Clark L."/>
            <person name="Corton C."/>
            <person name="Cronin A."/>
            <person name="Doggett J."/>
            <person name="Dowd L."/>
            <person name="Feltwell T."/>
            <person name="Hance Z."/>
            <person name="Harris B."/>
            <person name="Hauser H."/>
            <person name="Holroyd S."/>
            <person name="Jagels K."/>
            <person name="James K.D."/>
            <person name="Lennard N."/>
            <person name="Line A."/>
            <person name="Mayes R."/>
            <person name="Moule S."/>
            <person name="Mungall K."/>
            <person name="Ormond D."/>
            <person name="Quail M.A."/>
            <person name="Rabbinowitsch E."/>
            <person name="Rutherford K.M."/>
            <person name="Sanders M."/>
            <person name="Sharp S."/>
            <person name="Simmonds M."/>
            <person name="Stevens K."/>
            <person name="Whitehead S."/>
            <person name="Barrell B.G."/>
            <person name="Spratt B.G."/>
            <person name="Parkhill J."/>
        </authorList>
    </citation>
    <scope>NUCLEOTIDE SEQUENCE [LARGE SCALE GENOMIC DNA]</scope>
    <source>
        <strain>MSSA476</strain>
    </source>
</reference>
<evidence type="ECO:0000250" key="1"/>
<evidence type="ECO:0000250" key="2">
    <source>
        <dbReference type="UniProtKB" id="Q2FUY2"/>
    </source>
</evidence>
<evidence type="ECO:0000255" key="3">
    <source>
        <dbReference type="PROSITE-ProRule" id="PRU00477"/>
    </source>
</evidence>
<evidence type="ECO:0000256" key="4">
    <source>
        <dbReference type="SAM" id="MobiDB-lite"/>
    </source>
</evidence>
<evidence type="ECO:0000305" key="5"/>